<organism>
    <name type="scientific">Methylococcus capsulatus (strain ATCC 33009 / NCIMB 11132 / Bath)</name>
    <dbReference type="NCBI Taxonomy" id="243233"/>
    <lineage>
        <taxon>Bacteria</taxon>
        <taxon>Pseudomonadati</taxon>
        <taxon>Pseudomonadota</taxon>
        <taxon>Gammaproteobacteria</taxon>
        <taxon>Methylococcales</taxon>
        <taxon>Methylococcaceae</taxon>
        <taxon>Methylococcus</taxon>
    </lineage>
</organism>
<keyword id="KW-1185">Reference proteome</keyword>
<keyword id="KW-0808">Transferase</keyword>
<keyword id="KW-0819">tRNA processing</keyword>
<name>CMOB_METCA</name>
<evidence type="ECO:0000255" key="1">
    <source>
        <dbReference type="HAMAP-Rule" id="MF_01590"/>
    </source>
</evidence>
<gene>
    <name evidence="1" type="primary">cmoB</name>
    <name type="ordered locus">MCA2790</name>
</gene>
<proteinExistence type="inferred from homology"/>
<comment type="function">
    <text evidence="1">Catalyzes carboxymethyl transfer from carboxy-S-adenosyl-L-methionine (Cx-SAM) to 5-hydroxyuridine (ho5U) to form 5-carboxymethoxyuridine (cmo5U) at position 34 in tRNAs.</text>
</comment>
<comment type="catalytic activity">
    <reaction evidence="1">
        <text>carboxy-S-adenosyl-L-methionine + 5-hydroxyuridine(34) in tRNA = 5-carboxymethoxyuridine(34) in tRNA + S-adenosyl-L-homocysteine + H(+)</text>
        <dbReference type="Rhea" id="RHEA:52848"/>
        <dbReference type="Rhea" id="RHEA-COMP:13381"/>
        <dbReference type="Rhea" id="RHEA-COMP:13383"/>
        <dbReference type="ChEBI" id="CHEBI:15378"/>
        <dbReference type="ChEBI" id="CHEBI:57856"/>
        <dbReference type="ChEBI" id="CHEBI:134278"/>
        <dbReference type="ChEBI" id="CHEBI:136877"/>
        <dbReference type="ChEBI" id="CHEBI:136879"/>
    </reaction>
</comment>
<comment type="subunit">
    <text evidence="1">Homotetramer.</text>
</comment>
<comment type="similarity">
    <text evidence="1">Belongs to the class I-like SAM-binding methyltransferase superfamily. CmoB family.</text>
</comment>
<reference key="1">
    <citation type="journal article" date="2004" name="PLoS Biol.">
        <title>Genomic insights into methanotrophy: the complete genome sequence of Methylococcus capsulatus (Bath).</title>
        <authorList>
            <person name="Ward N.L."/>
            <person name="Larsen O."/>
            <person name="Sakwa J."/>
            <person name="Bruseth L."/>
            <person name="Khouri H.M."/>
            <person name="Durkin A.S."/>
            <person name="Dimitrov G."/>
            <person name="Jiang L."/>
            <person name="Scanlan D."/>
            <person name="Kang K.H."/>
            <person name="Lewis M.R."/>
            <person name="Nelson K.E."/>
            <person name="Methe B.A."/>
            <person name="Wu M."/>
            <person name="Heidelberg J.F."/>
            <person name="Paulsen I.T."/>
            <person name="Fouts D.E."/>
            <person name="Ravel J."/>
            <person name="Tettelin H."/>
            <person name="Ren Q."/>
            <person name="Read T.D."/>
            <person name="DeBoy R.T."/>
            <person name="Seshadri R."/>
            <person name="Salzberg S.L."/>
            <person name="Jensen H.B."/>
            <person name="Birkeland N.K."/>
            <person name="Nelson W.C."/>
            <person name="Dodson R.J."/>
            <person name="Grindhaug S.H."/>
            <person name="Holt I.E."/>
            <person name="Eidhammer I."/>
            <person name="Jonasen I."/>
            <person name="Vanaken S."/>
            <person name="Utterback T.R."/>
            <person name="Feldblyum T.V."/>
            <person name="Fraser C.M."/>
            <person name="Lillehaug J.R."/>
            <person name="Eisen J.A."/>
        </authorList>
    </citation>
    <scope>NUCLEOTIDE SEQUENCE [LARGE SCALE GENOMIC DNA]</scope>
    <source>
        <strain>ATCC 33009 / NCIMB 11132 / Bath</strain>
    </source>
</reference>
<sequence>MSDRDLFAGLLAPRSFPGWVELLLPRIEARFQEGRHGDWPAWMQLLGELPKVVPTRLDFAQNAVRIEGDTDCDGATRRSIETALRRLHPWRKGPYDIHGIFIDAEWRSDLKWRRLEGAIAPLAGRRVLDVGCGNGYHAWRMLGAGAKSVIGIDPTLLSVVQFLAVRHFAGDWPVAVLPLGIEDFPAETRAFDTVFSMGVLYHRRSPFDHLVELKGCLRPGGELVLETLVVEGEAGRVLVPEGRYAQMRNVWFVPSPPTLSSWLTRAGFRQARLIDVSPTTTQEQRSTGWMRFQSLADFLDPEDPSRTIEGHPAPRRAIFLAEAP</sequence>
<feature type="chain" id="PRO_0000313936" description="tRNA U34 carboxymethyltransferase">
    <location>
        <begin position="1"/>
        <end position="324"/>
    </location>
</feature>
<feature type="binding site" evidence="1">
    <location>
        <position position="92"/>
    </location>
    <ligand>
        <name>carboxy-S-adenosyl-L-methionine</name>
        <dbReference type="ChEBI" id="CHEBI:134278"/>
    </ligand>
</feature>
<feature type="binding site" evidence="1">
    <location>
        <position position="106"/>
    </location>
    <ligand>
        <name>carboxy-S-adenosyl-L-methionine</name>
        <dbReference type="ChEBI" id="CHEBI:134278"/>
    </ligand>
</feature>
<feature type="binding site" evidence="1">
    <location>
        <position position="111"/>
    </location>
    <ligand>
        <name>carboxy-S-adenosyl-L-methionine</name>
        <dbReference type="ChEBI" id="CHEBI:134278"/>
    </ligand>
</feature>
<feature type="binding site" evidence="1">
    <location>
        <position position="131"/>
    </location>
    <ligand>
        <name>carboxy-S-adenosyl-L-methionine</name>
        <dbReference type="ChEBI" id="CHEBI:134278"/>
    </ligand>
</feature>
<feature type="binding site" evidence="1">
    <location>
        <begin position="153"/>
        <end position="155"/>
    </location>
    <ligand>
        <name>carboxy-S-adenosyl-L-methionine</name>
        <dbReference type="ChEBI" id="CHEBI:134278"/>
    </ligand>
</feature>
<feature type="binding site" evidence="1">
    <location>
        <begin position="181"/>
        <end position="182"/>
    </location>
    <ligand>
        <name>carboxy-S-adenosyl-L-methionine</name>
        <dbReference type="ChEBI" id="CHEBI:134278"/>
    </ligand>
</feature>
<feature type="binding site" evidence="1">
    <location>
        <position position="197"/>
    </location>
    <ligand>
        <name>carboxy-S-adenosyl-L-methionine</name>
        <dbReference type="ChEBI" id="CHEBI:134278"/>
    </ligand>
</feature>
<feature type="binding site" evidence="1">
    <location>
        <position position="201"/>
    </location>
    <ligand>
        <name>carboxy-S-adenosyl-L-methionine</name>
        <dbReference type="ChEBI" id="CHEBI:134278"/>
    </ligand>
</feature>
<feature type="binding site" evidence="1">
    <location>
        <position position="316"/>
    </location>
    <ligand>
        <name>carboxy-S-adenosyl-L-methionine</name>
        <dbReference type="ChEBI" id="CHEBI:134278"/>
    </ligand>
</feature>
<protein>
    <recommendedName>
        <fullName evidence="1">tRNA U34 carboxymethyltransferase</fullName>
        <ecNumber evidence="1">2.5.1.-</ecNumber>
    </recommendedName>
</protein>
<dbReference type="EC" id="2.5.1.-" evidence="1"/>
<dbReference type="EMBL" id="AE017282">
    <property type="protein sequence ID" value="AAU91098.1"/>
    <property type="molecule type" value="Genomic_DNA"/>
</dbReference>
<dbReference type="RefSeq" id="WP_010961991.1">
    <property type="nucleotide sequence ID" value="NC_002977.6"/>
</dbReference>
<dbReference type="SMR" id="Q603L5"/>
<dbReference type="STRING" id="243233.MCA2790"/>
<dbReference type="GeneID" id="88224966"/>
<dbReference type="KEGG" id="mca:MCA2790"/>
<dbReference type="eggNOG" id="COG2227">
    <property type="taxonomic scope" value="Bacteria"/>
</dbReference>
<dbReference type="HOGENOM" id="CLU_052665_0_0_6"/>
<dbReference type="Proteomes" id="UP000006821">
    <property type="component" value="Chromosome"/>
</dbReference>
<dbReference type="GO" id="GO:0008168">
    <property type="term" value="F:methyltransferase activity"/>
    <property type="evidence" value="ECO:0007669"/>
    <property type="project" value="TreeGrafter"/>
</dbReference>
<dbReference type="GO" id="GO:0016765">
    <property type="term" value="F:transferase activity, transferring alkyl or aryl (other than methyl) groups"/>
    <property type="evidence" value="ECO:0007669"/>
    <property type="project" value="UniProtKB-UniRule"/>
</dbReference>
<dbReference type="GO" id="GO:0002098">
    <property type="term" value="P:tRNA wobble uridine modification"/>
    <property type="evidence" value="ECO:0007669"/>
    <property type="project" value="InterPro"/>
</dbReference>
<dbReference type="CDD" id="cd02440">
    <property type="entry name" value="AdoMet_MTases"/>
    <property type="match status" value="1"/>
</dbReference>
<dbReference type="Gene3D" id="3.40.50.150">
    <property type="entry name" value="Vaccinia Virus protein VP39"/>
    <property type="match status" value="1"/>
</dbReference>
<dbReference type="HAMAP" id="MF_01590">
    <property type="entry name" value="tRNA_carboxymethyltr_CmoB"/>
    <property type="match status" value="1"/>
</dbReference>
<dbReference type="InterPro" id="IPR010017">
    <property type="entry name" value="CmoB"/>
</dbReference>
<dbReference type="InterPro" id="IPR027555">
    <property type="entry name" value="Mo5U34_MeTrfas-like"/>
</dbReference>
<dbReference type="InterPro" id="IPR029063">
    <property type="entry name" value="SAM-dependent_MTases_sf"/>
</dbReference>
<dbReference type="NCBIfam" id="NF011650">
    <property type="entry name" value="PRK15068.1"/>
    <property type="match status" value="1"/>
</dbReference>
<dbReference type="NCBIfam" id="TIGR00452">
    <property type="entry name" value="tRNA 5-methoxyuridine(34)/uridine 5-oxyacetic acid(34) synthase CmoB"/>
    <property type="match status" value="1"/>
</dbReference>
<dbReference type="PANTHER" id="PTHR43464">
    <property type="entry name" value="METHYLTRANSFERASE"/>
    <property type="match status" value="1"/>
</dbReference>
<dbReference type="PANTHER" id="PTHR43464:SF95">
    <property type="entry name" value="TRNA U34 CARBOXYMETHYLTRANSFERASE"/>
    <property type="match status" value="1"/>
</dbReference>
<dbReference type="Pfam" id="PF08003">
    <property type="entry name" value="Methyltransf_9"/>
    <property type="match status" value="1"/>
</dbReference>
<dbReference type="SUPFAM" id="SSF53335">
    <property type="entry name" value="S-adenosyl-L-methionine-dependent methyltransferases"/>
    <property type="match status" value="1"/>
</dbReference>
<accession>Q603L5</accession>